<protein>
    <recommendedName>
        <fullName evidence="1">Large ribosomal subunit protein bL12</fullName>
    </recommendedName>
    <alternativeName>
        <fullName evidence="2">50S ribosomal protein L7/L12</fullName>
    </alternativeName>
</protein>
<feature type="chain" id="PRO_0000243514" description="Large ribosomal subunit protein bL12">
    <location>
        <begin position="1"/>
        <end position="128"/>
    </location>
</feature>
<accession>Q31QK6</accession>
<name>RL7_SYNE7</name>
<proteinExistence type="inferred from homology"/>
<dbReference type="EMBL" id="CP000100">
    <property type="protein sequence ID" value="ABB56663.1"/>
    <property type="molecule type" value="Genomic_DNA"/>
</dbReference>
<dbReference type="RefSeq" id="WP_011243206.1">
    <property type="nucleotide sequence ID" value="NZ_JACJTX010000006.1"/>
</dbReference>
<dbReference type="SMR" id="Q31QK6"/>
<dbReference type="STRING" id="1140.Synpcc7942_0631"/>
<dbReference type="PaxDb" id="1140-Synpcc7942_0631"/>
<dbReference type="GeneID" id="72429464"/>
<dbReference type="KEGG" id="syf:Synpcc7942_0631"/>
<dbReference type="eggNOG" id="COG0222">
    <property type="taxonomic scope" value="Bacteria"/>
</dbReference>
<dbReference type="HOGENOM" id="CLU_086499_3_0_3"/>
<dbReference type="OrthoDB" id="9811748at2"/>
<dbReference type="BioCyc" id="SYNEL:SYNPCC7942_0631-MONOMER"/>
<dbReference type="Proteomes" id="UP000889800">
    <property type="component" value="Chromosome"/>
</dbReference>
<dbReference type="GO" id="GO:0022625">
    <property type="term" value="C:cytosolic large ribosomal subunit"/>
    <property type="evidence" value="ECO:0007669"/>
    <property type="project" value="TreeGrafter"/>
</dbReference>
<dbReference type="GO" id="GO:0003729">
    <property type="term" value="F:mRNA binding"/>
    <property type="evidence" value="ECO:0007669"/>
    <property type="project" value="TreeGrafter"/>
</dbReference>
<dbReference type="GO" id="GO:0003735">
    <property type="term" value="F:structural constituent of ribosome"/>
    <property type="evidence" value="ECO:0007669"/>
    <property type="project" value="InterPro"/>
</dbReference>
<dbReference type="GO" id="GO:0006412">
    <property type="term" value="P:translation"/>
    <property type="evidence" value="ECO:0007669"/>
    <property type="project" value="UniProtKB-UniRule"/>
</dbReference>
<dbReference type="CDD" id="cd00387">
    <property type="entry name" value="Ribosomal_L7_L12"/>
    <property type="match status" value="1"/>
</dbReference>
<dbReference type="FunFam" id="3.30.1390.10:FF:000001">
    <property type="entry name" value="50S ribosomal protein L7/L12"/>
    <property type="match status" value="1"/>
</dbReference>
<dbReference type="Gene3D" id="3.30.1390.10">
    <property type="match status" value="1"/>
</dbReference>
<dbReference type="Gene3D" id="1.20.5.710">
    <property type="entry name" value="Single helix bin"/>
    <property type="match status" value="1"/>
</dbReference>
<dbReference type="HAMAP" id="MF_00368">
    <property type="entry name" value="Ribosomal_bL12"/>
    <property type="match status" value="1"/>
</dbReference>
<dbReference type="InterPro" id="IPR000206">
    <property type="entry name" value="Ribosomal_bL12"/>
</dbReference>
<dbReference type="InterPro" id="IPR013823">
    <property type="entry name" value="Ribosomal_bL12_C"/>
</dbReference>
<dbReference type="InterPro" id="IPR014719">
    <property type="entry name" value="Ribosomal_bL12_C/ClpS-like"/>
</dbReference>
<dbReference type="InterPro" id="IPR008932">
    <property type="entry name" value="Ribosomal_bL12_oligo"/>
</dbReference>
<dbReference type="InterPro" id="IPR036235">
    <property type="entry name" value="Ribosomal_bL12_oligo_N_sf"/>
</dbReference>
<dbReference type="NCBIfam" id="TIGR00855">
    <property type="entry name" value="L12"/>
    <property type="match status" value="1"/>
</dbReference>
<dbReference type="PANTHER" id="PTHR45987">
    <property type="entry name" value="39S RIBOSOMAL PROTEIN L12"/>
    <property type="match status" value="1"/>
</dbReference>
<dbReference type="PANTHER" id="PTHR45987:SF4">
    <property type="entry name" value="LARGE RIBOSOMAL SUBUNIT PROTEIN BL12M"/>
    <property type="match status" value="1"/>
</dbReference>
<dbReference type="Pfam" id="PF00542">
    <property type="entry name" value="Ribosomal_L12"/>
    <property type="match status" value="1"/>
</dbReference>
<dbReference type="Pfam" id="PF16320">
    <property type="entry name" value="Ribosomal_L12_N"/>
    <property type="match status" value="1"/>
</dbReference>
<dbReference type="SUPFAM" id="SSF54736">
    <property type="entry name" value="ClpS-like"/>
    <property type="match status" value="1"/>
</dbReference>
<dbReference type="SUPFAM" id="SSF48300">
    <property type="entry name" value="Ribosomal protein L7/12, oligomerisation (N-terminal) domain"/>
    <property type="match status" value="1"/>
</dbReference>
<gene>
    <name evidence="1" type="primary">rplL</name>
    <name evidence="1" type="synonym">rpl12</name>
    <name type="ordered locus">Synpcc7942_0631</name>
</gene>
<sequence length="128" mass="13151">MSAKTDEILESLKTLTLLEAAELVKQIEEAFGVSAAAPVGGVVVAAAAGAAAEAVEEKTEFDVVLEEVPADKKIAVLKVVRGITGLGLKEAKDLVEAAPKPIKEGVSKDDAEAAKKELEEAGAKVSVK</sequence>
<comment type="function">
    <text evidence="1">Forms part of the ribosomal stalk which helps the ribosome interact with GTP-bound translation factors. Is thus essential for accurate translation.</text>
</comment>
<comment type="subunit">
    <text evidence="1">Homodimer. Part of the ribosomal stalk of the 50S ribosomal subunit. Forms a multimeric L10(L12)X complex, where L10 forms an elongated spine to which 2 to 4 L12 dimers bind in a sequential fashion. Binds GTP-bound translation factors.</text>
</comment>
<comment type="similarity">
    <text evidence="1">Belongs to the bacterial ribosomal protein bL12 family.</text>
</comment>
<keyword id="KW-1185">Reference proteome</keyword>
<keyword id="KW-0687">Ribonucleoprotein</keyword>
<keyword id="KW-0689">Ribosomal protein</keyword>
<evidence type="ECO:0000255" key="1">
    <source>
        <dbReference type="HAMAP-Rule" id="MF_00368"/>
    </source>
</evidence>
<evidence type="ECO:0000305" key="2"/>
<reference key="1">
    <citation type="submission" date="2005-08" db="EMBL/GenBank/DDBJ databases">
        <title>Complete sequence of chromosome 1 of Synechococcus elongatus PCC 7942.</title>
        <authorList>
            <consortium name="US DOE Joint Genome Institute"/>
            <person name="Copeland A."/>
            <person name="Lucas S."/>
            <person name="Lapidus A."/>
            <person name="Barry K."/>
            <person name="Detter J.C."/>
            <person name="Glavina T."/>
            <person name="Hammon N."/>
            <person name="Israni S."/>
            <person name="Pitluck S."/>
            <person name="Schmutz J."/>
            <person name="Larimer F."/>
            <person name="Land M."/>
            <person name="Kyrpides N."/>
            <person name="Lykidis A."/>
            <person name="Golden S."/>
            <person name="Richardson P."/>
        </authorList>
    </citation>
    <scope>NUCLEOTIDE SEQUENCE [LARGE SCALE GENOMIC DNA]</scope>
    <source>
        <strain>ATCC 33912 / PCC 7942 / FACHB-805</strain>
    </source>
</reference>
<organism>
    <name type="scientific">Synechococcus elongatus (strain ATCC 33912 / PCC 7942 / FACHB-805)</name>
    <name type="common">Anacystis nidulans R2</name>
    <dbReference type="NCBI Taxonomy" id="1140"/>
    <lineage>
        <taxon>Bacteria</taxon>
        <taxon>Bacillati</taxon>
        <taxon>Cyanobacteriota</taxon>
        <taxon>Cyanophyceae</taxon>
        <taxon>Synechococcales</taxon>
        <taxon>Synechococcaceae</taxon>
        <taxon>Synechococcus</taxon>
    </lineage>
</organism>